<sequence>MESKEQHLIRQYFILAMFFLFLAGCAQKRSLETTTYENWKTHLAEQSIWQVEGKLAFISPDERQSANLNWQQSQNNNNLVLTTFIGTRILSLKQTANTAELNYDGEQYFDTNATALLKRLTGFALPVNNADSWLKGTIDDQTLKVDQLGRAKSVLWFDSTGKKWQIEYASFVQKSGYWLPSRLTLTHQKIKIKIQLYDWQFN</sequence>
<organism>
    <name type="scientific">Pseudoalteromonas translucida (strain TAC 125)</name>
    <dbReference type="NCBI Taxonomy" id="326442"/>
    <lineage>
        <taxon>Bacteria</taxon>
        <taxon>Pseudomonadati</taxon>
        <taxon>Pseudomonadota</taxon>
        <taxon>Gammaproteobacteria</taxon>
        <taxon>Alteromonadales</taxon>
        <taxon>Pseudoalteromonadaceae</taxon>
        <taxon>Pseudoalteromonas</taxon>
    </lineage>
</organism>
<keyword id="KW-0998">Cell outer membrane</keyword>
<keyword id="KW-0143">Chaperone</keyword>
<keyword id="KW-0449">Lipoprotein</keyword>
<keyword id="KW-0472">Membrane</keyword>
<keyword id="KW-0564">Palmitate</keyword>
<keyword id="KW-0653">Protein transport</keyword>
<keyword id="KW-1185">Reference proteome</keyword>
<keyword id="KW-0732">Signal</keyword>
<keyword id="KW-0813">Transport</keyword>
<proteinExistence type="inferred from homology"/>
<reference key="1">
    <citation type="journal article" date="2005" name="Genome Res.">
        <title>Coping with cold: the genome of the versatile marine Antarctica bacterium Pseudoalteromonas haloplanktis TAC125.</title>
        <authorList>
            <person name="Medigue C."/>
            <person name="Krin E."/>
            <person name="Pascal G."/>
            <person name="Barbe V."/>
            <person name="Bernsel A."/>
            <person name="Bertin P.N."/>
            <person name="Cheung F."/>
            <person name="Cruveiller S."/>
            <person name="D'Amico S."/>
            <person name="Duilio A."/>
            <person name="Fang G."/>
            <person name="Feller G."/>
            <person name="Ho C."/>
            <person name="Mangenot S."/>
            <person name="Marino G."/>
            <person name="Nilsson J."/>
            <person name="Parrilli E."/>
            <person name="Rocha E.P.C."/>
            <person name="Rouy Z."/>
            <person name="Sekowska A."/>
            <person name="Tutino M.L."/>
            <person name="Vallenet D."/>
            <person name="von Heijne G."/>
            <person name="Danchin A."/>
        </authorList>
    </citation>
    <scope>NUCLEOTIDE SEQUENCE [LARGE SCALE GENOMIC DNA]</scope>
    <source>
        <strain>TAC 125</strain>
    </source>
</reference>
<comment type="function">
    <text evidence="1">Plays a critical role in the incorporation of lipoproteins in the outer membrane after they are released by the LolA protein.</text>
</comment>
<comment type="subunit">
    <text evidence="1">Monomer.</text>
</comment>
<comment type="subcellular location">
    <subcellularLocation>
        <location evidence="1">Cell outer membrane</location>
        <topology evidence="1">Lipid-anchor</topology>
    </subcellularLocation>
</comment>
<comment type="similarity">
    <text evidence="1">Belongs to the LolB family.</text>
</comment>
<accession>Q3IK97</accession>
<name>LOLB_PSET1</name>
<evidence type="ECO:0000255" key="1">
    <source>
        <dbReference type="HAMAP-Rule" id="MF_00233"/>
    </source>
</evidence>
<dbReference type="EMBL" id="CR954246">
    <property type="protein sequence ID" value="CAI86131.1"/>
    <property type="molecule type" value="Genomic_DNA"/>
</dbReference>
<dbReference type="SMR" id="Q3IK97"/>
<dbReference type="STRING" id="326442.PSHAa1056"/>
<dbReference type="KEGG" id="pha:PSHAa1056"/>
<dbReference type="eggNOG" id="COG3017">
    <property type="taxonomic scope" value="Bacteria"/>
</dbReference>
<dbReference type="HOGENOM" id="CLU_092816_1_0_6"/>
<dbReference type="Proteomes" id="UP000006843">
    <property type="component" value="Chromosome I"/>
</dbReference>
<dbReference type="GO" id="GO:0009279">
    <property type="term" value="C:cell outer membrane"/>
    <property type="evidence" value="ECO:0007669"/>
    <property type="project" value="UniProtKB-SubCell"/>
</dbReference>
<dbReference type="GO" id="GO:0044874">
    <property type="term" value="P:lipoprotein localization to outer membrane"/>
    <property type="evidence" value="ECO:0007669"/>
    <property type="project" value="UniProtKB-UniRule"/>
</dbReference>
<dbReference type="GO" id="GO:0015031">
    <property type="term" value="P:protein transport"/>
    <property type="evidence" value="ECO:0007669"/>
    <property type="project" value="UniProtKB-KW"/>
</dbReference>
<dbReference type="CDD" id="cd16326">
    <property type="entry name" value="LolB"/>
    <property type="match status" value="1"/>
</dbReference>
<dbReference type="Gene3D" id="2.50.20.10">
    <property type="entry name" value="Lipoprotein localisation LolA/LolB/LppX"/>
    <property type="match status" value="1"/>
</dbReference>
<dbReference type="HAMAP" id="MF_00233">
    <property type="entry name" value="LolB"/>
    <property type="match status" value="1"/>
</dbReference>
<dbReference type="InterPro" id="IPR029046">
    <property type="entry name" value="LolA/LolB/LppX"/>
</dbReference>
<dbReference type="InterPro" id="IPR004565">
    <property type="entry name" value="OM_lipoprot_LolB"/>
</dbReference>
<dbReference type="NCBIfam" id="TIGR00548">
    <property type="entry name" value="lolB"/>
    <property type="match status" value="1"/>
</dbReference>
<dbReference type="Pfam" id="PF03550">
    <property type="entry name" value="LolB"/>
    <property type="match status" value="1"/>
</dbReference>
<dbReference type="SUPFAM" id="SSF89392">
    <property type="entry name" value="Prokaryotic lipoproteins and lipoprotein localization factors"/>
    <property type="match status" value="1"/>
</dbReference>
<dbReference type="PROSITE" id="PS51257">
    <property type="entry name" value="PROKAR_LIPOPROTEIN"/>
    <property type="match status" value="1"/>
</dbReference>
<feature type="signal peptide" evidence="1">
    <location>
        <begin position="1"/>
        <end position="24"/>
    </location>
</feature>
<feature type="chain" id="PRO_0000336613" description="Outer-membrane lipoprotein LolB">
    <location>
        <begin position="25"/>
        <end position="202"/>
    </location>
</feature>
<feature type="lipid moiety-binding region" description="N-palmitoyl cysteine" evidence="1">
    <location>
        <position position="25"/>
    </location>
</feature>
<feature type="lipid moiety-binding region" description="S-diacylglycerol cysteine" evidence="1">
    <location>
        <position position="25"/>
    </location>
</feature>
<protein>
    <recommendedName>
        <fullName evidence="1">Outer-membrane lipoprotein LolB</fullName>
    </recommendedName>
</protein>
<gene>
    <name evidence="1" type="primary">lolB</name>
    <name type="ordered locus">PSHAa1056</name>
</gene>